<gene>
    <name evidence="1" type="primary">recR</name>
    <name type="ordered locus">Mrad2831_3145</name>
</gene>
<protein>
    <recommendedName>
        <fullName evidence="1">Recombination protein RecR</fullName>
    </recommendedName>
</protein>
<keyword id="KW-0227">DNA damage</keyword>
<keyword id="KW-0233">DNA recombination</keyword>
<keyword id="KW-0234">DNA repair</keyword>
<keyword id="KW-0479">Metal-binding</keyword>
<keyword id="KW-0862">Zinc</keyword>
<keyword id="KW-0863">Zinc-finger</keyword>
<evidence type="ECO:0000255" key="1">
    <source>
        <dbReference type="HAMAP-Rule" id="MF_00017"/>
    </source>
</evidence>
<comment type="function">
    <text evidence="1">May play a role in DNA repair. It seems to be involved in an RecBC-independent recombinational process of DNA repair. It may act with RecF and RecO.</text>
</comment>
<comment type="similarity">
    <text evidence="1">Belongs to the RecR family.</text>
</comment>
<proteinExistence type="inferred from homology"/>
<organism>
    <name type="scientific">Methylobacterium radiotolerans (strain ATCC 27329 / DSM 1819 / JCM 2831 / NBRC 15690 / NCIMB 10815 / 0-1)</name>
    <dbReference type="NCBI Taxonomy" id="426355"/>
    <lineage>
        <taxon>Bacteria</taxon>
        <taxon>Pseudomonadati</taxon>
        <taxon>Pseudomonadota</taxon>
        <taxon>Alphaproteobacteria</taxon>
        <taxon>Hyphomicrobiales</taxon>
        <taxon>Methylobacteriaceae</taxon>
        <taxon>Methylobacterium</taxon>
    </lineage>
</organism>
<name>RECR_METRJ</name>
<sequence length="201" mass="21595">MPQAVAGPEIERLIQLLARMPGLGPRSARRAALQLIKKRDTLLGPLADAMRVAADRIVVCTSCGNVDTSDPCTICRDAERDPTTLVVVEDVSDLWALERSGAVKARYHVLGGVLSALDGVRPEHLNLASLVERVARPEVTEVILALNATVDGQTTAHYVTESIRHCDVKVTRLAHGVPVGGELDYLDEGTLSAAIRSRTAF</sequence>
<reference key="1">
    <citation type="submission" date="2008-03" db="EMBL/GenBank/DDBJ databases">
        <title>Complete sequence of chromosome of Methylobacterium radiotolerans JCM 2831.</title>
        <authorList>
            <consortium name="US DOE Joint Genome Institute"/>
            <person name="Copeland A."/>
            <person name="Lucas S."/>
            <person name="Lapidus A."/>
            <person name="Glavina del Rio T."/>
            <person name="Dalin E."/>
            <person name="Tice H."/>
            <person name="Bruce D."/>
            <person name="Goodwin L."/>
            <person name="Pitluck S."/>
            <person name="Kiss H."/>
            <person name="Brettin T."/>
            <person name="Detter J.C."/>
            <person name="Han C."/>
            <person name="Kuske C.R."/>
            <person name="Schmutz J."/>
            <person name="Larimer F."/>
            <person name="Land M."/>
            <person name="Hauser L."/>
            <person name="Kyrpides N."/>
            <person name="Mikhailova N."/>
            <person name="Marx C.J."/>
            <person name="Richardson P."/>
        </authorList>
    </citation>
    <scope>NUCLEOTIDE SEQUENCE [LARGE SCALE GENOMIC DNA]</scope>
    <source>
        <strain>ATCC 27329 / DSM 1819 / JCM 2831 / NBRC 15690 / NCIMB 10815 / 0-1</strain>
    </source>
</reference>
<feature type="chain" id="PRO_1000089746" description="Recombination protein RecR">
    <location>
        <begin position="1"/>
        <end position="201"/>
    </location>
</feature>
<feature type="domain" description="Toprim" evidence="1">
    <location>
        <begin position="83"/>
        <end position="178"/>
    </location>
</feature>
<feature type="zinc finger region" description="C4-type" evidence="1">
    <location>
        <begin position="60"/>
        <end position="75"/>
    </location>
</feature>
<accession>B1M6N6</accession>
<dbReference type="EMBL" id="CP001001">
    <property type="protein sequence ID" value="ACB25127.1"/>
    <property type="molecule type" value="Genomic_DNA"/>
</dbReference>
<dbReference type="RefSeq" id="WP_012320092.1">
    <property type="nucleotide sequence ID" value="NC_010505.1"/>
</dbReference>
<dbReference type="SMR" id="B1M6N6"/>
<dbReference type="STRING" id="426355.Mrad2831_3145"/>
<dbReference type="GeneID" id="6139192"/>
<dbReference type="KEGG" id="mrd:Mrad2831_3145"/>
<dbReference type="eggNOG" id="COG0353">
    <property type="taxonomic scope" value="Bacteria"/>
</dbReference>
<dbReference type="HOGENOM" id="CLU_060739_1_1_5"/>
<dbReference type="OrthoDB" id="9802672at2"/>
<dbReference type="Proteomes" id="UP000006589">
    <property type="component" value="Chromosome"/>
</dbReference>
<dbReference type="GO" id="GO:0003677">
    <property type="term" value="F:DNA binding"/>
    <property type="evidence" value="ECO:0007669"/>
    <property type="project" value="UniProtKB-UniRule"/>
</dbReference>
<dbReference type="GO" id="GO:0008270">
    <property type="term" value="F:zinc ion binding"/>
    <property type="evidence" value="ECO:0007669"/>
    <property type="project" value="UniProtKB-KW"/>
</dbReference>
<dbReference type="GO" id="GO:0006310">
    <property type="term" value="P:DNA recombination"/>
    <property type="evidence" value="ECO:0007669"/>
    <property type="project" value="UniProtKB-UniRule"/>
</dbReference>
<dbReference type="GO" id="GO:0006281">
    <property type="term" value="P:DNA repair"/>
    <property type="evidence" value="ECO:0007669"/>
    <property type="project" value="UniProtKB-UniRule"/>
</dbReference>
<dbReference type="CDD" id="cd01025">
    <property type="entry name" value="TOPRIM_recR"/>
    <property type="match status" value="1"/>
</dbReference>
<dbReference type="Gene3D" id="3.40.1360.10">
    <property type="match status" value="1"/>
</dbReference>
<dbReference type="Gene3D" id="6.10.250.240">
    <property type="match status" value="1"/>
</dbReference>
<dbReference type="Gene3D" id="1.10.8.420">
    <property type="entry name" value="RecR Domain 1"/>
    <property type="match status" value="1"/>
</dbReference>
<dbReference type="HAMAP" id="MF_00017">
    <property type="entry name" value="RecR"/>
    <property type="match status" value="1"/>
</dbReference>
<dbReference type="InterPro" id="IPR000093">
    <property type="entry name" value="DNA_Rcmb_RecR"/>
</dbReference>
<dbReference type="InterPro" id="IPR023627">
    <property type="entry name" value="Rcmb_RecR"/>
</dbReference>
<dbReference type="InterPro" id="IPR015967">
    <property type="entry name" value="Rcmb_RecR_Znf"/>
</dbReference>
<dbReference type="InterPro" id="IPR006171">
    <property type="entry name" value="TOPRIM_dom"/>
</dbReference>
<dbReference type="InterPro" id="IPR034137">
    <property type="entry name" value="TOPRIM_RecR"/>
</dbReference>
<dbReference type="NCBIfam" id="TIGR00615">
    <property type="entry name" value="recR"/>
    <property type="match status" value="1"/>
</dbReference>
<dbReference type="PANTHER" id="PTHR30446">
    <property type="entry name" value="RECOMBINATION PROTEIN RECR"/>
    <property type="match status" value="1"/>
</dbReference>
<dbReference type="PANTHER" id="PTHR30446:SF0">
    <property type="entry name" value="RECOMBINATION PROTEIN RECR"/>
    <property type="match status" value="1"/>
</dbReference>
<dbReference type="Pfam" id="PF21175">
    <property type="entry name" value="RecR_C"/>
    <property type="match status" value="1"/>
</dbReference>
<dbReference type="Pfam" id="PF21176">
    <property type="entry name" value="RecR_HhH"/>
    <property type="match status" value="1"/>
</dbReference>
<dbReference type="Pfam" id="PF13662">
    <property type="entry name" value="Toprim_4"/>
    <property type="match status" value="1"/>
</dbReference>
<dbReference type="SMART" id="SM00493">
    <property type="entry name" value="TOPRIM"/>
    <property type="match status" value="1"/>
</dbReference>
<dbReference type="SUPFAM" id="SSF111304">
    <property type="entry name" value="Recombination protein RecR"/>
    <property type="match status" value="1"/>
</dbReference>
<dbReference type="PROSITE" id="PS01300">
    <property type="entry name" value="RECR"/>
    <property type="match status" value="1"/>
</dbReference>
<dbReference type="PROSITE" id="PS50880">
    <property type="entry name" value="TOPRIM"/>
    <property type="match status" value="1"/>
</dbReference>